<dbReference type="EC" id="2.4.2.39" evidence="7"/>
<dbReference type="EMBL" id="DP000009">
    <property type="protein sequence ID" value="ABF95475.1"/>
    <property type="molecule type" value="Genomic_DNA"/>
</dbReference>
<dbReference type="EMBL" id="AP008209">
    <property type="protein sequence ID" value="BAF11767.1"/>
    <property type="status" value="ALT_INIT"/>
    <property type="molecule type" value="Genomic_DNA"/>
</dbReference>
<dbReference type="EMBL" id="AP014959">
    <property type="status" value="NOT_ANNOTATED_CDS"/>
    <property type="molecule type" value="Genomic_DNA"/>
</dbReference>
<dbReference type="EMBL" id="CM000145">
    <property type="protein sequence ID" value="EAZ43011.1"/>
    <property type="molecule type" value="Genomic_DNA"/>
</dbReference>
<dbReference type="EMBL" id="AK060863">
    <property type="status" value="NOT_ANNOTATED_CDS"/>
    <property type="molecule type" value="mRNA"/>
</dbReference>
<dbReference type="RefSeq" id="XP_015631442.1">
    <property type="nucleotide sequence ID" value="XM_015775956.1"/>
</dbReference>
<dbReference type="SMR" id="Q10MQ0"/>
<dbReference type="FunCoup" id="Q10MQ0">
    <property type="interactions" value="329"/>
</dbReference>
<dbReference type="STRING" id="39947.Q10MQ0"/>
<dbReference type="CAZy" id="GT34">
    <property type="family name" value="Glycosyltransferase Family 34"/>
</dbReference>
<dbReference type="GlyCosmos" id="Q10MQ0">
    <property type="glycosylation" value="1 site, No reported glycans"/>
</dbReference>
<dbReference type="PaxDb" id="39947-Q10MQ0"/>
<dbReference type="EnsemblPlants" id="Os03t0300000-01">
    <property type="protein sequence ID" value="Os03t0300000-01"/>
    <property type="gene ID" value="Os03g0300000"/>
</dbReference>
<dbReference type="Gramene" id="Os03t0300000-01">
    <property type="protein sequence ID" value="Os03t0300000-01"/>
    <property type="gene ID" value="Os03g0300000"/>
</dbReference>
<dbReference type="KEGG" id="dosa:Os03g0300000"/>
<dbReference type="eggNOG" id="KOG4748">
    <property type="taxonomic scope" value="Eukaryota"/>
</dbReference>
<dbReference type="InParanoid" id="Q10MQ0"/>
<dbReference type="OrthoDB" id="205108at2759"/>
<dbReference type="PlantReactome" id="R-OSA-5655101">
    <property type="pathway name" value="Xyloglucan biosynthesis"/>
</dbReference>
<dbReference type="PlantReactome" id="R-OSA-9639861">
    <property type="pathway name" value="Development of root hair"/>
</dbReference>
<dbReference type="Proteomes" id="UP000000763">
    <property type="component" value="Chromosome 3"/>
</dbReference>
<dbReference type="Proteomes" id="UP000007752">
    <property type="component" value="Chromosome 8"/>
</dbReference>
<dbReference type="Proteomes" id="UP000059680">
    <property type="component" value="Chromosome 3"/>
</dbReference>
<dbReference type="GO" id="GO:0000139">
    <property type="term" value="C:Golgi membrane"/>
    <property type="evidence" value="ECO:0007669"/>
    <property type="project" value="UniProtKB-SubCell"/>
</dbReference>
<dbReference type="GO" id="GO:0016758">
    <property type="term" value="F:hexosyltransferase activity"/>
    <property type="evidence" value="ECO:0000318"/>
    <property type="project" value="GO_Central"/>
</dbReference>
<dbReference type="GO" id="GO:0035252">
    <property type="term" value="F:UDP-xylosyltransferase activity"/>
    <property type="evidence" value="ECO:0000318"/>
    <property type="project" value="GO_Central"/>
</dbReference>
<dbReference type="GO" id="GO:0033843">
    <property type="term" value="F:xyloglucan 6-xylosyltransferase activity"/>
    <property type="evidence" value="ECO:0000318"/>
    <property type="project" value="GO_Central"/>
</dbReference>
<dbReference type="GO" id="GO:0048767">
    <property type="term" value="P:root hair elongation"/>
    <property type="evidence" value="ECO:0000315"/>
    <property type="project" value="UniProtKB"/>
</dbReference>
<dbReference type="GO" id="GO:0009969">
    <property type="term" value="P:xyloglucan biosynthetic process"/>
    <property type="evidence" value="ECO:0000318"/>
    <property type="project" value="GO_Central"/>
</dbReference>
<dbReference type="FunFam" id="3.90.550.10:FF:000032">
    <property type="entry name" value="xyloglucan 6-xylosyltransferase 2"/>
    <property type="match status" value="1"/>
</dbReference>
<dbReference type="Gene3D" id="3.90.550.10">
    <property type="entry name" value="Spore Coat Polysaccharide Biosynthesis Protein SpsA, Chain A"/>
    <property type="match status" value="1"/>
</dbReference>
<dbReference type="InterPro" id="IPR008630">
    <property type="entry name" value="Glyco_trans_34"/>
</dbReference>
<dbReference type="InterPro" id="IPR029044">
    <property type="entry name" value="Nucleotide-diphossugar_trans"/>
</dbReference>
<dbReference type="PANTHER" id="PTHR31311:SF5">
    <property type="entry name" value="XYLOGLUCAN 6-XYLOSYLTRANSFERASE 2"/>
    <property type="match status" value="1"/>
</dbReference>
<dbReference type="PANTHER" id="PTHR31311">
    <property type="entry name" value="XYLOGLUCAN 6-XYLOSYLTRANSFERASE 5-RELATED-RELATED"/>
    <property type="match status" value="1"/>
</dbReference>
<dbReference type="Pfam" id="PF05637">
    <property type="entry name" value="Glyco_transf_34"/>
    <property type="match status" value="1"/>
</dbReference>
<protein>
    <recommendedName>
        <fullName evidence="7">Probable xyloglucan 6-xylosyltransferase 1</fullName>
        <shortName evidence="6">OsXXT1</shortName>
        <ecNumber evidence="7">2.4.2.39</ecNumber>
    </recommendedName>
    <alternativeName>
        <fullName evidence="6">Proteinn SHORT ROOT HAIR 2</fullName>
    </alternativeName>
</protein>
<reference key="1">
    <citation type="journal article" date="2005" name="Genome Res.">
        <title>Sequence, annotation, and analysis of synteny between rice chromosome 3 and diverged grass species.</title>
        <authorList>
            <consortium name="The rice chromosome 3 sequencing consortium"/>
            <person name="Buell C.R."/>
            <person name="Yuan Q."/>
            <person name="Ouyang S."/>
            <person name="Liu J."/>
            <person name="Zhu W."/>
            <person name="Wang A."/>
            <person name="Maiti R."/>
            <person name="Haas B."/>
            <person name="Wortman J."/>
            <person name="Pertea M."/>
            <person name="Jones K.M."/>
            <person name="Kim M."/>
            <person name="Overton L."/>
            <person name="Tsitrin T."/>
            <person name="Fadrosh D."/>
            <person name="Bera J."/>
            <person name="Weaver B."/>
            <person name="Jin S."/>
            <person name="Johri S."/>
            <person name="Reardon M."/>
            <person name="Webb K."/>
            <person name="Hill J."/>
            <person name="Moffat K."/>
            <person name="Tallon L."/>
            <person name="Van Aken S."/>
            <person name="Lewis M."/>
            <person name="Utterback T."/>
            <person name="Feldblyum T."/>
            <person name="Zismann V."/>
            <person name="Iobst S."/>
            <person name="Hsiao J."/>
            <person name="de Vazeille A.R."/>
            <person name="Salzberg S.L."/>
            <person name="White O."/>
            <person name="Fraser C.M."/>
            <person name="Yu Y."/>
            <person name="Kim H."/>
            <person name="Rambo T."/>
            <person name="Currie J."/>
            <person name="Collura K."/>
            <person name="Kernodle-Thompson S."/>
            <person name="Wei F."/>
            <person name="Kudrna K."/>
            <person name="Ammiraju J.S.S."/>
            <person name="Luo M."/>
            <person name="Goicoechea J.L."/>
            <person name="Wing R.A."/>
            <person name="Henry D."/>
            <person name="Oates R."/>
            <person name="Palmer M."/>
            <person name="Pries G."/>
            <person name="Saski C."/>
            <person name="Simmons J."/>
            <person name="Soderlund C."/>
            <person name="Nelson W."/>
            <person name="de la Bastide M."/>
            <person name="Spiegel L."/>
            <person name="Nascimento L."/>
            <person name="Huang E."/>
            <person name="Preston R."/>
            <person name="Zutavern T."/>
            <person name="Palmer L."/>
            <person name="O'Shaughnessy A."/>
            <person name="Dike S."/>
            <person name="McCombie W.R."/>
            <person name="Minx P."/>
            <person name="Cordum H."/>
            <person name="Wilson R."/>
            <person name="Jin W."/>
            <person name="Lee H.R."/>
            <person name="Jiang J."/>
            <person name="Jackson S."/>
        </authorList>
    </citation>
    <scope>NUCLEOTIDE SEQUENCE [LARGE SCALE GENOMIC DNA]</scope>
    <source>
        <strain>cv. Nipponbare</strain>
    </source>
</reference>
<reference key="2">
    <citation type="journal article" date="2005" name="Nature">
        <title>The map-based sequence of the rice genome.</title>
        <authorList>
            <consortium name="International rice genome sequencing project (IRGSP)"/>
        </authorList>
    </citation>
    <scope>NUCLEOTIDE SEQUENCE [LARGE SCALE GENOMIC DNA]</scope>
    <source>
        <strain>cv. Nipponbare</strain>
    </source>
</reference>
<reference key="3">
    <citation type="journal article" date="2008" name="Nucleic Acids Res.">
        <title>The rice annotation project database (RAP-DB): 2008 update.</title>
        <authorList>
            <consortium name="The rice annotation project (RAP)"/>
        </authorList>
    </citation>
    <scope>GENOME REANNOTATION</scope>
    <source>
        <strain>cv. Nipponbare</strain>
    </source>
</reference>
<reference key="4">
    <citation type="journal article" date="2013" name="Rice">
        <title>Improvement of the Oryza sativa Nipponbare reference genome using next generation sequence and optical map data.</title>
        <authorList>
            <person name="Kawahara Y."/>
            <person name="de la Bastide M."/>
            <person name="Hamilton J.P."/>
            <person name="Kanamori H."/>
            <person name="McCombie W.R."/>
            <person name="Ouyang S."/>
            <person name="Schwartz D.C."/>
            <person name="Tanaka T."/>
            <person name="Wu J."/>
            <person name="Zhou S."/>
            <person name="Childs K.L."/>
            <person name="Davidson R.M."/>
            <person name="Lin H."/>
            <person name="Quesada-Ocampo L."/>
            <person name="Vaillancourt B."/>
            <person name="Sakai H."/>
            <person name="Lee S.S."/>
            <person name="Kim J."/>
            <person name="Numa H."/>
            <person name="Itoh T."/>
            <person name="Buell C.R."/>
            <person name="Matsumoto T."/>
        </authorList>
    </citation>
    <scope>GENOME REANNOTATION</scope>
    <source>
        <strain>cv. Nipponbare</strain>
    </source>
</reference>
<reference key="5">
    <citation type="journal article" date="2005" name="PLoS Biol.">
        <title>The genomes of Oryza sativa: a history of duplications.</title>
        <authorList>
            <person name="Yu J."/>
            <person name="Wang J."/>
            <person name="Lin W."/>
            <person name="Li S."/>
            <person name="Li H."/>
            <person name="Zhou J."/>
            <person name="Ni P."/>
            <person name="Dong W."/>
            <person name="Hu S."/>
            <person name="Zeng C."/>
            <person name="Zhang J."/>
            <person name="Zhang Y."/>
            <person name="Li R."/>
            <person name="Xu Z."/>
            <person name="Li S."/>
            <person name="Li X."/>
            <person name="Zheng H."/>
            <person name="Cong L."/>
            <person name="Lin L."/>
            <person name="Yin J."/>
            <person name="Geng J."/>
            <person name="Li G."/>
            <person name="Shi J."/>
            <person name="Liu J."/>
            <person name="Lv H."/>
            <person name="Li J."/>
            <person name="Wang J."/>
            <person name="Deng Y."/>
            <person name="Ran L."/>
            <person name="Shi X."/>
            <person name="Wang X."/>
            <person name="Wu Q."/>
            <person name="Li C."/>
            <person name="Ren X."/>
            <person name="Wang J."/>
            <person name="Wang X."/>
            <person name="Li D."/>
            <person name="Liu D."/>
            <person name="Zhang X."/>
            <person name="Ji Z."/>
            <person name="Zhao W."/>
            <person name="Sun Y."/>
            <person name="Zhang Z."/>
            <person name="Bao J."/>
            <person name="Han Y."/>
            <person name="Dong L."/>
            <person name="Ji J."/>
            <person name="Chen P."/>
            <person name="Wu S."/>
            <person name="Liu J."/>
            <person name="Xiao Y."/>
            <person name="Bu D."/>
            <person name="Tan J."/>
            <person name="Yang L."/>
            <person name="Ye C."/>
            <person name="Zhang J."/>
            <person name="Xu J."/>
            <person name="Zhou Y."/>
            <person name="Yu Y."/>
            <person name="Zhang B."/>
            <person name="Zhuang S."/>
            <person name="Wei H."/>
            <person name="Liu B."/>
            <person name="Lei M."/>
            <person name="Yu H."/>
            <person name="Li Y."/>
            <person name="Xu H."/>
            <person name="Wei S."/>
            <person name="He X."/>
            <person name="Fang L."/>
            <person name="Zhang Z."/>
            <person name="Zhang Y."/>
            <person name="Huang X."/>
            <person name="Su Z."/>
            <person name="Tong W."/>
            <person name="Li J."/>
            <person name="Tong Z."/>
            <person name="Li S."/>
            <person name="Ye J."/>
            <person name="Wang L."/>
            <person name="Fang L."/>
            <person name="Lei T."/>
            <person name="Chen C.-S."/>
            <person name="Chen H.-C."/>
            <person name="Xu Z."/>
            <person name="Li H."/>
            <person name="Huang H."/>
            <person name="Zhang F."/>
            <person name="Xu H."/>
            <person name="Li N."/>
            <person name="Zhao C."/>
            <person name="Li S."/>
            <person name="Dong L."/>
            <person name="Huang Y."/>
            <person name="Li L."/>
            <person name="Xi Y."/>
            <person name="Qi Q."/>
            <person name="Li W."/>
            <person name="Zhang B."/>
            <person name="Hu W."/>
            <person name="Zhang Y."/>
            <person name="Tian X."/>
            <person name="Jiao Y."/>
            <person name="Liang X."/>
            <person name="Jin J."/>
            <person name="Gao L."/>
            <person name="Zheng W."/>
            <person name="Hao B."/>
            <person name="Liu S.-M."/>
            <person name="Wang W."/>
            <person name="Yuan L."/>
            <person name="Cao M."/>
            <person name="McDermott J."/>
            <person name="Samudrala R."/>
            <person name="Wang J."/>
            <person name="Wong G.K.-S."/>
            <person name="Yang H."/>
        </authorList>
    </citation>
    <scope>NUCLEOTIDE SEQUENCE [LARGE SCALE GENOMIC DNA]</scope>
    <source>
        <strain>cv. Nipponbare</strain>
    </source>
</reference>
<reference key="6">
    <citation type="journal article" date="2003" name="Science">
        <title>Collection, mapping, and annotation of over 28,000 cDNA clones from japonica rice.</title>
        <authorList>
            <consortium name="The rice full-length cDNA consortium"/>
        </authorList>
    </citation>
    <scope>NUCLEOTIDE SEQUENCE [LARGE SCALE MRNA] OF 101-448</scope>
    <source>
        <strain>cv. Nipponbare</strain>
    </source>
</reference>
<reference key="7">
    <citation type="journal article" date="2013" name="Gene">
        <title>A collection of glycosyltransferases from rice (Oryza sativa) exposed to atrazine.</title>
        <authorList>
            <person name="Lu Y.C."/>
            <person name="Yang S.N."/>
            <person name="Zhang J.J."/>
            <person name="Zhang J.J."/>
            <person name="Tan L.R."/>
            <person name="Yang H."/>
        </authorList>
    </citation>
    <scope>INDUCTION</scope>
</reference>
<reference key="8">
    <citation type="journal article" date="2014" name="J. Exp. Bot.">
        <title>Mutation in xyloglucan 6-xylosytransferase results in abnormal root hair development in Oryza sativa.</title>
        <authorList>
            <person name="Wang C."/>
            <person name="Li S."/>
            <person name="Ng S."/>
            <person name="Zhang B."/>
            <person name="Zhou Y."/>
            <person name="Whelan J."/>
            <person name="Wu P."/>
            <person name="Shou H."/>
        </authorList>
    </citation>
    <scope>FUNCTION</scope>
    <scope>TISSUE SPECIFICITY</scope>
    <scope>DISRUPTION PHENOTYPE</scope>
</reference>
<proteinExistence type="evidence at transcript level"/>
<gene>
    <name type="primary">XXT1</name>
    <name evidence="6" type="synonym">SRH2</name>
    <name evidence="9" type="ordered locus">Os03g0300000</name>
    <name evidence="8" type="ordered locus">LOC_Os03g18820</name>
    <name evidence="10" type="ORF">OsJ_27597</name>
</gene>
<feature type="chain" id="PRO_0000434323" description="Probable xyloglucan 6-xylosyltransferase 1">
    <location>
        <begin position="1"/>
        <end position="448"/>
    </location>
</feature>
<feature type="topological domain" description="Cytoplasmic" evidence="7">
    <location>
        <begin position="1"/>
        <end position="19"/>
    </location>
</feature>
<feature type="transmembrane region" description="Helical; Signal-anchor for type II membrane protein" evidence="1">
    <location>
        <begin position="20"/>
        <end position="42"/>
    </location>
</feature>
<feature type="topological domain" description="Lumenal" evidence="7">
    <location>
        <begin position="43"/>
        <end position="448"/>
    </location>
</feature>
<feature type="region of interest" description="Disordered" evidence="3">
    <location>
        <begin position="71"/>
        <end position="113"/>
    </location>
</feature>
<feature type="glycosylation site" description="N-linked (GlcNAc...) asparagine" evidence="2">
    <location>
        <position position="421"/>
    </location>
</feature>
<sequence length="448" mass="51646">MWVAERVVGERRMREIQRFARNAKLTVVCLLLTVVVLRGTVGAGKFGTPQQDLIELRHRFISHPHRALAEHHDALSRGGGSSSSSGRAAQRDDEPDPPPRTLRDPPYTLGPKISDWDEQRAAWHRRHPETPPFVNDVKPRVLLVTGSSPKPCENPVGDHYLLKSIKNKMDYCRVHGLEIFYNMALLDAEMAGFWAKLPLLRALLLAHPEIEFLWWMDSDAMFSDMAFELPWERYGPYNLIMHGWDEMVYDDKNWIGLNTGSFLLRNCQWSLDFLDTWAPMGPKGPVRIEAGKVLTKYLKDRPVFEADDQSAMVYILATEREKWGDKVYLENGYYLHGYWGILVDRYEEMLENYHPGLGDHRWPLVTHFVGCKPCGKFGDYPVERCLKQMERAFNFGDNQILQMYGFTHKSLGSRKVKRIRNETSNPLDVKDELGLLHPAFKAMKTTST</sequence>
<comment type="function">
    <text evidence="5">Probable xyloglucan xylosyltransferase involved in the biosynthesis of xyloglucan in roots.</text>
</comment>
<comment type="catalytic activity">
    <reaction evidence="7">
        <text>Transfers an alpha-D-xylosyl residue from UDP-D-xylose to a glucose residue in xyloglucan, forming an alpha-(1-&gt;6)-D-xylosyl-D-glucose linkage.</text>
        <dbReference type="EC" id="2.4.2.39"/>
    </reaction>
</comment>
<comment type="subcellular location">
    <subcellularLocation>
        <location evidence="7">Golgi apparatus membrane</location>
        <topology evidence="7">Single-pass type II membrane protein</topology>
    </subcellularLocation>
</comment>
<comment type="tissue specificity">
    <text evidence="5">Expressed in root tips, leaves, inflorescences and panicles.</text>
</comment>
<comment type="induction">
    <text evidence="4">Down-regulated by treatment with atrazine.</text>
</comment>
<comment type="disruption phenotype">
    <text evidence="5">Root hair phenotype, characterized by short root hairs with bubble-like extrusions at the tip.</text>
</comment>
<comment type="similarity">
    <text evidence="7">Belongs to the glycosyltransferase 34 family.</text>
</comment>
<comment type="sequence caution" evidence="7">
    <conflict type="erroneous initiation">
        <sequence resource="EMBL-CDS" id="BAF11767"/>
    </conflict>
    <text>Truncated N-terminus.</text>
</comment>
<accession>Q10MQ0</accession>
<accession>Q0DSM1</accession>
<organism>
    <name type="scientific">Oryza sativa subsp. japonica</name>
    <name type="common">Rice</name>
    <dbReference type="NCBI Taxonomy" id="39947"/>
    <lineage>
        <taxon>Eukaryota</taxon>
        <taxon>Viridiplantae</taxon>
        <taxon>Streptophyta</taxon>
        <taxon>Embryophyta</taxon>
        <taxon>Tracheophyta</taxon>
        <taxon>Spermatophyta</taxon>
        <taxon>Magnoliopsida</taxon>
        <taxon>Liliopsida</taxon>
        <taxon>Poales</taxon>
        <taxon>Poaceae</taxon>
        <taxon>BOP clade</taxon>
        <taxon>Oryzoideae</taxon>
        <taxon>Oryzeae</taxon>
        <taxon>Oryzinae</taxon>
        <taxon>Oryza</taxon>
        <taxon>Oryza sativa</taxon>
    </lineage>
</organism>
<evidence type="ECO:0000255" key="1"/>
<evidence type="ECO:0000255" key="2">
    <source>
        <dbReference type="PROSITE-ProRule" id="PRU00498"/>
    </source>
</evidence>
<evidence type="ECO:0000256" key="3">
    <source>
        <dbReference type="SAM" id="MobiDB-lite"/>
    </source>
</evidence>
<evidence type="ECO:0000269" key="4">
    <source>
    </source>
</evidence>
<evidence type="ECO:0000269" key="5">
    <source>
    </source>
</evidence>
<evidence type="ECO:0000303" key="6">
    <source>
    </source>
</evidence>
<evidence type="ECO:0000305" key="7"/>
<evidence type="ECO:0000312" key="8">
    <source>
        <dbReference type="EMBL" id="ABF95475.1"/>
    </source>
</evidence>
<evidence type="ECO:0000312" key="9">
    <source>
        <dbReference type="EMBL" id="BAF11767.1"/>
    </source>
</evidence>
<evidence type="ECO:0000312" key="10">
    <source>
        <dbReference type="EMBL" id="EAZ43011.1"/>
    </source>
</evidence>
<name>XXT1_ORYSJ</name>
<keyword id="KW-0325">Glycoprotein</keyword>
<keyword id="KW-0328">Glycosyltransferase</keyword>
<keyword id="KW-0333">Golgi apparatus</keyword>
<keyword id="KW-0472">Membrane</keyword>
<keyword id="KW-1185">Reference proteome</keyword>
<keyword id="KW-0735">Signal-anchor</keyword>
<keyword id="KW-0808">Transferase</keyword>
<keyword id="KW-0812">Transmembrane</keyword>
<keyword id="KW-1133">Transmembrane helix</keyword>